<organism>
    <name type="scientific">Bos taurus</name>
    <name type="common">Bovine</name>
    <dbReference type="NCBI Taxonomy" id="9913"/>
    <lineage>
        <taxon>Eukaryota</taxon>
        <taxon>Metazoa</taxon>
        <taxon>Chordata</taxon>
        <taxon>Craniata</taxon>
        <taxon>Vertebrata</taxon>
        <taxon>Euteleostomi</taxon>
        <taxon>Mammalia</taxon>
        <taxon>Eutheria</taxon>
        <taxon>Laurasiatheria</taxon>
        <taxon>Artiodactyla</taxon>
        <taxon>Ruminantia</taxon>
        <taxon>Pecora</taxon>
        <taxon>Bovidae</taxon>
        <taxon>Bovinae</taxon>
        <taxon>Bos</taxon>
    </lineage>
</organism>
<reference key="1">
    <citation type="submission" date="2005-09" db="EMBL/GenBank/DDBJ databases">
        <authorList>
            <consortium name="NIH - Mammalian Gene Collection (MGC) project"/>
        </authorList>
    </citation>
    <scope>NUCLEOTIDE SEQUENCE [LARGE SCALE MRNA]</scope>
    <source>
        <strain>Crossbred X Angus</strain>
        <tissue>Ileum</tissue>
    </source>
</reference>
<name>RAB8B_BOVIN</name>
<proteinExistence type="evidence at transcript level"/>
<dbReference type="EC" id="3.6.5.2" evidence="2"/>
<dbReference type="EMBL" id="BC105330">
    <property type="protein sequence ID" value="AAI05331.1"/>
    <property type="molecule type" value="mRNA"/>
</dbReference>
<dbReference type="RefSeq" id="NP_001069785.1">
    <property type="nucleotide sequence ID" value="NM_001076317.1"/>
</dbReference>
<dbReference type="SMR" id="Q2HJI8"/>
<dbReference type="FunCoup" id="Q2HJI8">
    <property type="interactions" value="3306"/>
</dbReference>
<dbReference type="STRING" id="9913.ENSBTAP00000014802"/>
<dbReference type="PaxDb" id="9913-ENSBTAP00000014802"/>
<dbReference type="GeneID" id="614242"/>
<dbReference type="KEGG" id="bta:614242"/>
<dbReference type="CTD" id="51762"/>
<dbReference type="eggNOG" id="KOG0078">
    <property type="taxonomic scope" value="Eukaryota"/>
</dbReference>
<dbReference type="InParanoid" id="Q2HJI8"/>
<dbReference type="OrthoDB" id="9989112at2759"/>
<dbReference type="Proteomes" id="UP000009136">
    <property type="component" value="Unplaced"/>
</dbReference>
<dbReference type="GO" id="GO:0005768">
    <property type="term" value="C:endosome"/>
    <property type="evidence" value="ECO:0000318"/>
    <property type="project" value="GO_Central"/>
</dbReference>
<dbReference type="GO" id="GO:0010008">
    <property type="term" value="C:endosome membrane"/>
    <property type="evidence" value="ECO:0000250"/>
    <property type="project" value="UniProtKB"/>
</dbReference>
<dbReference type="GO" id="GO:0045335">
    <property type="term" value="C:phagocytic vesicle"/>
    <property type="evidence" value="ECO:0000250"/>
    <property type="project" value="UniProtKB"/>
</dbReference>
<dbReference type="GO" id="GO:0030670">
    <property type="term" value="C:phagocytic vesicle membrane"/>
    <property type="evidence" value="ECO:0007669"/>
    <property type="project" value="UniProtKB-SubCell"/>
</dbReference>
<dbReference type="GO" id="GO:0005886">
    <property type="term" value="C:plasma membrane"/>
    <property type="evidence" value="ECO:0000318"/>
    <property type="project" value="GO_Central"/>
</dbReference>
<dbReference type="GO" id="GO:0008021">
    <property type="term" value="C:synaptic vesicle"/>
    <property type="evidence" value="ECO:0000318"/>
    <property type="project" value="GO_Central"/>
</dbReference>
<dbReference type="GO" id="GO:0030140">
    <property type="term" value="C:trans-Golgi network transport vesicle"/>
    <property type="evidence" value="ECO:0000318"/>
    <property type="project" value="GO_Central"/>
</dbReference>
<dbReference type="GO" id="GO:0019003">
    <property type="term" value="F:GDP binding"/>
    <property type="evidence" value="ECO:0000250"/>
    <property type="project" value="UniProtKB"/>
</dbReference>
<dbReference type="GO" id="GO:0005525">
    <property type="term" value="F:GTP binding"/>
    <property type="evidence" value="ECO:0007669"/>
    <property type="project" value="UniProtKB-KW"/>
</dbReference>
<dbReference type="GO" id="GO:0003924">
    <property type="term" value="F:GTPase activity"/>
    <property type="evidence" value="ECO:0000318"/>
    <property type="project" value="GO_Central"/>
</dbReference>
<dbReference type="GO" id="GO:0032456">
    <property type="term" value="P:endocytic recycling"/>
    <property type="evidence" value="ECO:0000318"/>
    <property type="project" value="GO_Central"/>
</dbReference>
<dbReference type="GO" id="GO:0006887">
    <property type="term" value="P:exocytosis"/>
    <property type="evidence" value="ECO:0000318"/>
    <property type="project" value="GO_Central"/>
</dbReference>
<dbReference type="GO" id="GO:0015031">
    <property type="term" value="P:protein transport"/>
    <property type="evidence" value="ECO:0007669"/>
    <property type="project" value="UniProtKB-KW"/>
</dbReference>
<dbReference type="CDD" id="cd01867">
    <property type="entry name" value="Rab8_Rab10_Rab13_like"/>
    <property type="match status" value="1"/>
</dbReference>
<dbReference type="FunFam" id="3.40.50.300:FF:000202">
    <property type="entry name" value="ras-related protein Rab-8A"/>
    <property type="match status" value="1"/>
</dbReference>
<dbReference type="Gene3D" id="3.40.50.300">
    <property type="entry name" value="P-loop containing nucleotide triphosphate hydrolases"/>
    <property type="match status" value="1"/>
</dbReference>
<dbReference type="InterPro" id="IPR027417">
    <property type="entry name" value="P-loop_NTPase"/>
</dbReference>
<dbReference type="InterPro" id="IPR005225">
    <property type="entry name" value="Small_GTP-bd"/>
</dbReference>
<dbReference type="InterPro" id="IPR001806">
    <property type="entry name" value="Small_GTPase"/>
</dbReference>
<dbReference type="InterPro" id="IPR050305">
    <property type="entry name" value="Small_GTPase_Rab"/>
</dbReference>
<dbReference type="NCBIfam" id="TIGR00231">
    <property type="entry name" value="small_GTP"/>
    <property type="match status" value="1"/>
</dbReference>
<dbReference type="PANTHER" id="PTHR47980">
    <property type="entry name" value="LD44762P"/>
    <property type="match status" value="1"/>
</dbReference>
<dbReference type="Pfam" id="PF00071">
    <property type="entry name" value="Ras"/>
    <property type="match status" value="1"/>
</dbReference>
<dbReference type="PRINTS" id="PR00449">
    <property type="entry name" value="RASTRNSFRMNG"/>
</dbReference>
<dbReference type="SMART" id="SM00177">
    <property type="entry name" value="ARF"/>
    <property type="match status" value="1"/>
</dbReference>
<dbReference type="SMART" id="SM00175">
    <property type="entry name" value="RAB"/>
    <property type="match status" value="1"/>
</dbReference>
<dbReference type="SMART" id="SM00176">
    <property type="entry name" value="RAN"/>
    <property type="match status" value="1"/>
</dbReference>
<dbReference type="SMART" id="SM00173">
    <property type="entry name" value="RAS"/>
    <property type="match status" value="1"/>
</dbReference>
<dbReference type="SMART" id="SM00174">
    <property type="entry name" value="RHO"/>
    <property type="match status" value="1"/>
</dbReference>
<dbReference type="SUPFAM" id="SSF52540">
    <property type="entry name" value="P-loop containing nucleoside triphosphate hydrolases"/>
    <property type="match status" value="1"/>
</dbReference>
<dbReference type="PROSITE" id="PS51419">
    <property type="entry name" value="RAB"/>
    <property type="match status" value="1"/>
</dbReference>
<evidence type="ECO:0000250" key="1"/>
<evidence type="ECO:0000250" key="2">
    <source>
        <dbReference type="UniProtKB" id="P61006"/>
    </source>
</evidence>
<evidence type="ECO:0000250" key="3">
    <source>
        <dbReference type="UniProtKB" id="P61028"/>
    </source>
</evidence>
<evidence type="ECO:0000250" key="4">
    <source>
        <dbReference type="UniProtKB" id="P62820"/>
    </source>
</evidence>
<evidence type="ECO:0000250" key="5">
    <source>
        <dbReference type="UniProtKB" id="P70550"/>
    </source>
</evidence>
<evidence type="ECO:0000250" key="6">
    <source>
        <dbReference type="UniProtKB" id="Q92930"/>
    </source>
</evidence>
<evidence type="ECO:0000255" key="7"/>
<evidence type="ECO:0000305" key="8"/>
<accession>Q2HJI8</accession>
<sequence>MAKTYDYLFKLLLIGDSGVGKTCLLFRFSEDAFNTTFISTIGIDFKIRTIELDGKKIKLQIWDTAGQERFRTITTAYYRGAMGIMLVYDITNEKSFDNIKNWIRNIEEHASSDVERMILGNKCDMNDKRQVSKERGEKLAIDYGIKFLEASAKSSMNVEEAFFTLARDIMTKLNRKMNDSNSSGAGGPVKITENRSKKTSFFRCLLL</sequence>
<comment type="function">
    <text evidence="2 5 6">The small GTPases Rab are key regulators of intracellular membrane trafficking, from the formation of transport vesicles to their fusion with membranes. Rabs cycle between an inactive GDP-bound form and an active GTP-bound form that is able to recruit to membranes different sets of downstream effectors directly responsible for vesicle formation, movement, tethering and fusion (By similarity). RAB8B may be involved in polarized vesicular trafficking and neurotransmitter release (By similarity). May participate in cell junction dynamics in Sertoli cells (By similarity). May also participate in the export of a subset of neosynthesized proteins through a Rab8-Rab10-Rab11-dependent endososomal export route (By similarity).</text>
</comment>
<comment type="catalytic activity">
    <reaction evidence="2">
        <text>GTP + H2O = GDP + phosphate + H(+)</text>
        <dbReference type="Rhea" id="RHEA:19669"/>
        <dbReference type="ChEBI" id="CHEBI:15377"/>
        <dbReference type="ChEBI" id="CHEBI:15378"/>
        <dbReference type="ChEBI" id="CHEBI:37565"/>
        <dbReference type="ChEBI" id="CHEBI:43474"/>
        <dbReference type="ChEBI" id="CHEBI:58189"/>
        <dbReference type="EC" id="3.6.5.2"/>
    </reaction>
    <physiologicalReaction direction="left-to-right" evidence="2">
        <dbReference type="Rhea" id="RHEA:19670"/>
    </physiologicalReaction>
</comment>
<comment type="cofactor">
    <cofactor evidence="2">
        <name>Mg(2+)</name>
        <dbReference type="ChEBI" id="CHEBI:18420"/>
    </cofactor>
</comment>
<comment type="activity regulation">
    <text evidence="6">Regulated by guanine nucleotide exchange factors (GEFs) including RAB3IP/RABIN8 which promotes the exchange of bound GDP for free GTP. Regulated by GTPase activating proteins (GAPs) which increase the GTP hydrolysis activity. Inhibited by GDP dissociation inhibitors (GDIs).</text>
</comment>
<comment type="subunit">
    <text evidence="3 5 6">Associated with actin, delta-catenin and alpha and beta tubulins (By similarity). Interacts with OTOF (By similarity). Interacts with PEX5R (By similarity). Interacts with RAB3IP (By similarity). Interacts with VIM (By similarity). Interacts with CDH1 (By similarity). Interacts with MICALL2 (By similarity). Interacts with GDI1, GDI2, CHML and CHM; phosphorylation at Thr-72 disrupts these interactions (By similarity). Interacts with MICAL1 (By similarity).</text>
</comment>
<comment type="subcellular location">
    <subcellularLocation>
        <location evidence="8">Cell membrane</location>
        <topology evidence="8">Lipid-anchor</topology>
        <orientation evidence="8">Cytoplasmic side</orientation>
    </subcellularLocation>
    <subcellularLocation>
        <location evidence="1">Cytoplasmic vesicle</location>
        <location evidence="1">Phagosome membrane</location>
        <topology evidence="1">Lipid-anchor</topology>
        <orientation evidence="1">Cytoplasmic side</orientation>
    </subcellularLocation>
    <subcellularLocation>
        <location evidence="6">Endosome membrane</location>
    </subcellularLocation>
    <text evidence="1">Recruited to phagosomes containing S.aureus or Mycobacterium.</text>
</comment>
<comment type="domain">
    <text evidence="4">Switch 1, switch 2 and the interswitch regions are characteristic of Rab GTPases and mediate the interactions with Rab downstream effectors. The switch regions undergo conformational changes upon nucleotide binding which drives interaction with specific sets of effector proteins, with most effectors only binding to GTP-bound Rab.</text>
</comment>
<comment type="PTM">
    <text evidence="6">Phosphorylation of Thr-72 in the switch II region by LRRK2 prevents the association of RAB regulatory proteins, including CHM, CHML and RAB GDP dissociation inhibitors GDI1 and GDI2.</text>
</comment>
<comment type="similarity">
    <text evidence="8">Belongs to the small GTPase superfamily. Rab family.</text>
</comment>
<gene>
    <name type="primary">RAB8B</name>
</gene>
<protein>
    <recommendedName>
        <fullName>Ras-related protein Rab-8B</fullName>
        <ecNumber evidence="2">3.6.5.2</ecNumber>
    </recommendedName>
</protein>
<keyword id="KW-1003">Cell membrane</keyword>
<keyword id="KW-0968">Cytoplasmic vesicle</keyword>
<keyword id="KW-0967">Endosome</keyword>
<keyword id="KW-0342">GTP-binding</keyword>
<keyword id="KW-0378">Hydrolase</keyword>
<keyword id="KW-0449">Lipoprotein</keyword>
<keyword id="KW-0460">Magnesium</keyword>
<keyword id="KW-0472">Membrane</keyword>
<keyword id="KW-0479">Metal-binding</keyword>
<keyword id="KW-0488">Methylation</keyword>
<keyword id="KW-0547">Nucleotide-binding</keyword>
<keyword id="KW-0597">Phosphoprotein</keyword>
<keyword id="KW-0636">Prenylation</keyword>
<keyword id="KW-0653">Protein transport</keyword>
<keyword id="KW-1185">Reference proteome</keyword>
<keyword id="KW-0813">Transport</keyword>
<feature type="chain" id="PRO_0000253740" description="Ras-related protein Rab-8B">
    <location>
        <begin position="1"/>
        <end position="204"/>
    </location>
</feature>
<feature type="propeptide" id="PRO_0000370799" description="Removed in mature form" evidence="7">
    <location>
        <begin position="205"/>
        <end position="207"/>
    </location>
</feature>
<feature type="short sequence motif" description="Switch 1" evidence="4">
    <location>
        <begin position="31"/>
        <end position="45"/>
    </location>
</feature>
<feature type="short sequence motif" description="Switch 2" evidence="4">
    <location>
        <begin position="63"/>
        <end position="80"/>
    </location>
</feature>
<feature type="binding site" evidence="2">
    <location>
        <position position="17"/>
    </location>
    <ligand>
        <name>GTP</name>
        <dbReference type="ChEBI" id="CHEBI:37565"/>
    </ligand>
</feature>
<feature type="binding site" evidence="2">
    <location>
        <position position="18"/>
    </location>
    <ligand>
        <name>GTP</name>
        <dbReference type="ChEBI" id="CHEBI:37565"/>
    </ligand>
</feature>
<feature type="binding site" evidence="2">
    <location>
        <position position="19"/>
    </location>
    <ligand>
        <name>GTP</name>
        <dbReference type="ChEBI" id="CHEBI:37565"/>
    </ligand>
</feature>
<feature type="binding site" evidence="2">
    <location>
        <position position="20"/>
    </location>
    <ligand>
        <name>GTP</name>
        <dbReference type="ChEBI" id="CHEBI:37565"/>
    </ligand>
</feature>
<feature type="binding site" evidence="2">
    <location>
        <position position="21"/>
    </location>
    <ligand>
        <name>GTP</name>
        <dbReference type="ChEBI" id="CHEBI:37565"/>
    </ligand>
</feature>
<feature type="binding site" evidence="2">
    <location>
        <position position="22"/>
    </location>
    <ligand>
        <name>GTP</name>
        <dbReference type="ChEBI" id="CHEBI:37565"/>
    </ligand>
</feature>
<feature type="binding site" evidence="2">
    <location>
        <position position="22"/>
    </location>
    <ligand>
        <name>Mg(2+)</name>
        <dbReference type="ChEBI" id="CHEBI:18420"/>
    </ligand>
</feature>
<feature type="binding site" evidence="2">
    <location>
        <position position="23"/>
    </location>
    <ligand>
        <name>GTP</name>
        <dbReference type="ChEBI" id="CHEBI:37565"/>
    </ligand>
</feature>
<feature type="binding site" evidence="2">
    <location>
        <position position="35"/>
    </location>
    <ligand>
        <name>GTP</name>
        <dbReference type="ChEBI" id="CHEBI:37565"/>
    </ligand>
</feature>
<feature type="binding site" evidence="2">
    <location>
        <position position="39"/>
    </location>
    <ligand>
        <name>GTP</name>
        <dbReference type="ChEBI" id="CHEBI:37565"/>
    </ligand>
</feature>
<feature type="binding site" evidence="2">
    <location>
        <position position="40"/>
    </location>
    <ligand>
        <name>GTP</name>
        <dbReference type="ChEBI" id="CHEBI:37565"/>
    </ligand>
</feature>
<feature type="binding site" evidence="2">
    <location>
        <position position="40"/>
    </location>
    <ligand>
        <name>Mg(2+)</name>
        <dbReference type="ChEBI" id="CHEBI:18420"/>
    </ligand>
</feature>
<feature type="binding site" evidence="2">
    <location>
        <position position="63"/>
    </location>
    <ligand>
        <name>Mg(2+)</name>
        <dbReference type="ChEBI" id="CHEBI:18420"/>
    </ligand>
</feature>
<feature type="binding site" evidence="2">
    <location>
        <position position="66"/>
    </location>
    <ligand>
        <name>GTP</name>
        <dbReference type="ChEBI" id="CHEBI:37565"/>
    </ligand>
</feature>
<feature type="binding site" evidence="2">
    <location>
        <position position="121"/>
    </location>
    <ligand>
        <name>GTP</name>
        <dbReference type="ChEBI" id="CHEBI:37565"/>
    </ligand>
</feature>
<feature type="binding site" evidence="2">
    <location>
        <position position="122"/>
    </location>
    <ligand>
        <name>GTP</name>
        <dbReference type="ChEBI" id="CHEBI:37565"/>
    </ligand>
</feature>
<feature type="binding site" evidence="2">
    <location>
        <position position="124"/>
    </location>
    <ligand>
        <name>GTP</name>
        <dbReference type="ChEBI" id="CHEBI:37565"/>
    </ligand>
</feature>
<feature type="binding site" evidence="2">
    <location>
        <position position="152"/>
    </location>
    <ligand>
        <name>GTP</name>
        <dbReference type="ChEBI" id="CHEBI:37565"/>
    </ligand>
</feature>
<feature type="binding site" evidence="2">
    <location>
        <position position="153"/>
    </location>
    <ligand>
        <name>GTP</name>
        <dbReference type="ChEBI" id="CHEBI:37565"/>
    </ligand>
</feature>
<feature type="modified residue" description="Phosphothreonine" evidence="6">
    <location>
        <position position="72"/>
    </location>
</feature>
<feature type="modified residue" description="Phosphoserine" evidence="3">
    <location>
        <position position="180"/>
    </location>
</feature>
<feature type="modified residue" description="Phosphoserine" evidence="3">
    <location>
        <position position="183"/>
    </location>
</feature>
<feature type="modified residue" description="Cysteine methyl ester" evidence="7">
    <location>
        <position position="204"/>
    </location>
</feature>
<feature type="lipid moiety-binding region" description="S-geranylgeranyl cysteine" evidence="1">
    <location>
        <position position="204"/>
    </location>
</feature>